<feature type="chain" id="PRO_0000058743" description="Indian hedgehog protein">
    <location>
        <begin position="1" status="less than"/>
        <end position="58" status="greater than"/>
    </location>
</feature>
<feature type="binding site" evidence="2">
    <location>
        <position position="13"/>
    </location>
    <ligand>
        <name>Ca(2+)</name>
        <dbReference type="ChEBI" id="CHEBI:29108"/>
        <label>1</label>
    </ligand>
</feature>
<feature type="binding site" evidence="2">
    <location>
        <position position="14"/>
    </location>
    <ligand>
        <name>Ca(2+)</name>
        <dbReference type="ChEBI" id="CHEBI:29108"/>
        <label>1</label>
    </ligand>
</feature>
<feature type="binding site" evidence="2">
    <location>
        <position position="14"/>
    </location>
    <ligand>
        <name>Ca(2+)</name>
        <dbReference type="ChEBI" id="CHEBI:29108"/>
        <label>2</label>
    </ligand>
</feature>
<feature type="binding site" evidence="2">
    <location>
        <position position="17"/>
    </location>
    <ligand>
        <name>Ca(2+)</name>
        <dbReference type="ChEBI" id="CHEBI:29108"/>
        <label>2</label>
    </ligand>
</feature>
<feature type="binding site" evidence="2">
    <location>
        <position position="19"/>
    </location>
    <ligand>
        <name>Ca(2+)</name>
        <dbReference type="ChEBI" id="CHEBI:29108"/>
        <label>2</label>
    </ligand>
</feature>
<feature type="binding site" evidence="2">
    <location>
        <position position="28"/>
    </location>
    <ligand>
        <name>Zn(2+)</name>
        <dbReference type="ChEBI" id="CHEBI:29105"/>
    </ligand>
</feature>
<feature type="binding site" evidence="2">
    <location>
        <position position="35"/>
    </location>
    <ligand>
        <name>Zn(2+)</name>
        <dbReference type="ChEBI" id="CHEBI:29105"/>
    </ligand>
</feature>
<feature type="non-terminal residue">
    <location>
        <position position="1"/>
    </location>
</feature>
<feature type="non-terminal residue">
    <location>
        <position position="58"/>
    </location>
</feature>
<reference key="1">
    <citation type="journal article" date="1996" name="Proc. Natl. Acad. Sci. U.S.A.">
        <title>Evolutionary analyses of hedgehog and Hoxd-10 genes in fish species closely related to the zebrafish.</title>
        <authorList>
            <person name="Zardoya R."/>
            <person name="Abouheif E."/>
            <person name="Meyer A."/>
        </authorList>
    </citation>
    <scope>NUCLEOTIDE SEQUENCE [GENOMIC DNA]</scope>
    <source>
        <tissue>Muscle</tissue>
    </source>
</reference>
<name>IHH_DEVDE</name>
<evidence type="ECO:0000250" key="1"/>
<evidence type="ECO:0000250" key="2">
    <source>
        <dbReference type="UniProtKB" id="Q14623"/>
    </source>
</evidence>
<evidence type="ECO:0000305" key="3"/>
<keyword id="KW-0068">Autocatalytic cleavage</keyword>
<keyword id="KW-0106">Calcium</keyword>
<keyword id="KW-1003">Cell membrane</keyword>
<keyword id="KW-0217">Developmental protein</keyword>
<keyword id="KW-0378">Hydrolase</keyword>
<keyword id="KW-0449">Lipoprotein</keyword>
<keyword id="KW-0472">Membrane</keyword>
<keyword id="KW-0479">Metal-binding</keyword>
<keyword id="KW-0564">Palmitate</keyword>
<keyword id="KW-0645">Protease</keyword>
<keyword id="KW-0964">Secreted</keyword>
<keyword id="KW-0862">Zinc</keyword>
<accession>O13243</accession>
<accession>O13205</accession>
<protein>
    <recommendedName>
        <fullName>Indian hedgehog protein</fullName>
        <shortName>IHH</shortName>
    </recommendedName>
</protein>
<gene>
    <name type="primary">ihh</name>
</gene>
<organism>
    <name type="scientific">Devario devario</name>
    <name type="common">Bengal danio</name>
    <name type="synonym">Danio devario</name>
    <dbReference type="NCBI Taxonomy" id="46781"/>
    <lineage>
        <taxon>Eukaryota</taxon>
        <taxon>Metazoa</taxon>
        <taxon>Chordata</taxon>
        <taxon>Craniata</taxon>
        <taxon>Vertebrata</taxon>
        <taxon>Euteleostomi</taxon>
        <taxon>Actinopterygii</taxon>
        <taxon>Neopterygii</taxon>
        <taxon>Teleostei</taxon>
        <taxon>Ostariophysi</taxon>
        <taxon>Cypriniformes</taxon>
        <taxon>Danionidae</taxon>
        <taxon>Danioninae</taxon>
        <taxon>Devario</taxon>
    </lineage>
</organism>
<sequence>VMNLWPGVRLRVTEGWDEDGHHSEESLHYEGRAVDITTSDRDRNKYAMLARLAVEAGF</sequence>
<dbReference type="EMBL" id="U51382">
    <property type="protein sequence ID" value="AAB38603.1"/>
    <property type="molecule type" value="Genomic_DNA"/>
</dbReference>
<dbReference type="SMR" id="O13243"/>
<dbReference type="GO" id="GO:0005615">
    <property type="term" value="C:extracellular space"/>
    <property type="evidence" value="ECO:0007669"/>
    <property type="project" value="TreeGrafter"/>
</dbReference>
<dbReference type="GO" id="GO:0005886">
    <property type="term" value="C:plasma membrane"/>
    <property type="evidence" value="ECO:0007669"/>
    <property type="project" value="UniProtKB-SubCell"/>
</dbReference>
<dbReference type="GO" id="GO:0005509">
    <property type="term" value="F:calcium ion binding"/>
    <property type="evidence" value="ECO:0007669"/>
    <property type="project" value="TreeGrafter"/>
</dbReference>
<dbReference type="GO" id="GO:0005113">
    <property type="term" value="F:patched binding"/>
    <property type="evidence" value="ECO:0007669"/>
    <property type="project" value="TreeGrafter"/>
</dbReference>
<dbReference type="GO" id="GO:0008233">
    <property type="term" value="F:peptidase activity"/>
    <property type="evidence" value="ECO:0007669"/>
    <property type="project" value="UniProtKB-KW"/>
</dbReference>
<dbReference type="GO" id="GO:0001708">
    <property type="term" value="P:cell fate specification"/>
    <property type="evidence" value="ECO:0007669"/>
    <property type="project" value="TreeGrafter"/>
</dbReference>
<dbReference type="GO" id="GO:0007267">
    <property type="term" value="P:cell-cell signaling"/>
    <property type="evidence" value="ECO:0007669"/>
    <property type="project" value="InterPro"/>
</dbReference>
<dbReference type="GO" id="GO:0006508">
    <property type="term" value="P:proteolysis"/>
    <property type="evidence" value="ECO:0007669"/>
    <property type="project" value="UniProtKB-KW"/>
</dbReference>
<dbReference type="GO" id="GO:0010468">
    <property type="term" value="P:regulation of gene expression"/>
    <property type="evidence" value="ECO:0007669"/>
    <property type="project" value="TreeGrafter"/>
</dbReference>
<dbReference type="GO" id="GO:0007224">
    <property type="term" value="P:smoothened signaling pathway"/>
    <property type="evidence" value="ECO:0007669"/>
    <property type="project" value="TreeGrafter"/>
</dbReference>
<dbReference type="Gene3D" id="3.30.1380.10">
    <property type="match status" value="1"/>
</dbReference>
<dbReference type="InterPro" id="IPR001657">
    <property type="entry name" value="Hedgehog"/>
</dbReference>
<dbReference type="InterPro" id="IPR009045">
    <property type="entry name" value="Hedgehog_sig/DD-Pept_Zn-bd_sf"/>
</dbReference>
<dbReference type="InterPro" id="IPR050387">
    <property type="entry name" value="Hedgehog_Signaling"/>
</dbReference>
<dbReference type="InterPro" id="IPR000320">
    <property type="entry name" value="Hedgehog_signalling_dom"/>
</dbReference>
<dbReference type="PANTHER" id="PTHR11889">
    <property type="entry name" value="HEDGEHOG"/>
    <property type="match status" value="1"/>
</dbReference>
<dbReference type="PANTHER" id="PTHR11889:SF39">
    <property type="entry name" value="INDIAN HEDGEHOG PROTEIN"/>
    <property type="match status" value="1"/>
</dbReference>
<dbReference type="Pfam" id="PF01085">
    <property type="entry name" value="HH_signal"/>
    <property type="match status" value="1"/>
</dbReference>
<dbReference type="PRINTS" id="PR00632">
    <property type="entry name" value="SONICHHOG"/>
</dbReference>
<dbReference type="SUPFAM" id="SSF55166">
    <property type="entry name" value="Hedgehog/DD-peptidase"/>
    <property type="match status" value="1"/>
</dbReference>
<comment type="function">
    <text evidence="1">Intercellular signal essential for a variety of patterning events during development.</text>
</comment>
<comment type="subcellular location">
    <subcellularLocation>
        <location evidence="1">Cell membrane</location>
    </subcellularLocation>
    <subcellularLocation>
        <location evidence="1">Secreted</location>
        <location evidence="1">Extracellular space</location>
    </subcellularLocation>
    <text evidence="1">Indian hedgehog protein N-product: Cell membrane; Lipid-anchor; Extracellular side. The N-terminal peptide remains associated with the cell surface. Indian hedgehog protein C-product: Secreted, extracellular space. The C-terminal peptide diffuses from the cell.</text>
</comment>
<comment type="domain">
    <text evidence="1">The indian hedgehog protein N-product binds calcium and zinc ions; this stabilizes the protein fold and is essential for protein-protein interactions mediated by this domain.</text>
</comment>
<comment type="PTM">
    <text evidence="1">The C-terminal domain displays an autoproteolysis activity and a cholesterol transferase activity. Both activities result in the cleavage of the full-length protein and covalent attachment of a cholesterol moiety to the C-terminal of the newly generated N-terminal fragment (N-product). The N-product is the active species in both local and long-range signaling, whereas the C-product has no signaling activity (By similarity).</text>
</comment>
<comment type="PTM">
    <text evidence="1">Cholesterylation is required for N-product targeting to lipid rafts and multimerization.</text>
</comment>
<comment type="PTM">
    <text evidence="1">N-palmitoylation is required for N-product multimerization and full activity.</text>
</comment>
<comment type="similarity">
    <text evidence="3">Belongs to the hedgehog family.</text>
</comment>
<proteinExistence type="inferred from homology"/>